<sequence>MEFLGTTQTASYCGPKKCCGLTSLPAVQAPVIQECYQPYYLPGYRYLNSWRPSLFYKISNVQTCPDESSSTLRPPTTLPALRSALFSRYSPHDWDQSNQLQVRGAEASRLWASRLTDDSVRLLQDKDQLTQQMQQGTTRNLGQRLSDIGFWKSELSYELDRLLTENQNLETVKRRLECAANEVNCPLQVALECLYHREKRIGIDLVHDNVEKNLIREVDLLKCCQQQMRKLAQRIDLQMRDNRDAQHALERDLDDKSSAQCIDEKCFNLRNTSDCISFFHGMEKIDGTISVPETWAKFSNDNIKHSQNMRADSIRLREEAEHLFETLSDQMWRQFTDTNLAFNARISEVTDVKNKLQTQLAKTLQEIFQAENTIMLLERSIMAKEGPLKVAQTRLECRTWRPNVELCRDVPQFKLVNEVFTIDDTLQTLKLRLRETQDMLQLLVMTKCRLEHELAIKANTLCIDKEKCMGMRKTFPCTPRLVGHT</sequence>
<proteinExistence type="evidence at transcript level"/>
<keyword id="KW-0966">Cell projection</keyword>
<keyword id="KW-0969">Cilium</keyword>
<keyword id="KW-0175">Coiled coil</keyword>
<keyword id="KW-0963">Cytoplasm</keyword>
<keyword id="KW-0206">Cytoskeleton</keyword>
<keyword id="KW-0282">Flagellum</keyword>
<keyword id="KW-1185">Reference proteome</keyword>
<keyword id="KW-0832">Ubl conjugation</keyword>
<reference key="1">
    <citation type="submission" date="2005-06" db="EMBL/GenBank/DDBJ databases">
        <title>DNA sequences of macaque genes expressed in brain or testis and its evolutionary implications.</title>
        <authorList>
            <consortium name="International consortium for macaque cDNA sequencing and analysis"/>
        </authorList>
    </citation>
    <scope>NUCLEOTIDE SEQUENCE [LARGE SCALE MRNA]</scope>
    <source>
        <tissue>Testis</tissue>
    </source>
</reference>
<accession>Q4R353</accession>
<evidence type="ECO:0000250" key="1">
    <source>
        <dbReference type="UniProtKB" id="G5E8A8"/>
    </source>
</evidence>
<evidence type="ECO:0000250" key="2">
    <source>
        <dbReference type="UniProtKB" id="Q96M29"/>
    </source>
</evidence>
<evidence type="ECO:0000255" key="3"/>
<evidence type="ECO:0000305" key="4"/>
<organism>
    <name type="scientific">Macaca fascicularis</name>
    <name type="common">Crab-eating macaque</name>
    <name type="synonym">Cynomolgus monkey</name>
    <dbReference type="NCBI Taxonomy" id="9541"/>
    <lineage>
        <taxon>Eukaryota</taxon>
        <taxon>Metazoa</taxon>
        <taxon>Chordata</taxon>
        <taxon>Craniata</taxon>
        <taxon>Vertebrata</taxon>
        <taxon>Euteleostomi</taxon>
        <taxon>Mammalia</taxon>
        <taxon>Eutheria</taxon>
        <taxon>Euarchontoglires</taxon>
        <taxon>Primates</taxon>
        <taxon>Haplorrhini</taxon>
        <taxon>Catarrhini</taxon>
        <taxon>Cercopithecidae</taxon>
        <taxon>Cercopithecinae</taxon>
        <taxon>Macaca</taxon>
    </lineage>
</organism>
<comment type="function">
    <text evidence="1">Sperm-specific microtubule inner protein (MIP) part of the dynein-decorated doublet microtubules (DMTs) in flagellar axoneme. Forms an extensive interaction network in different conformations that reinforces the helix bundle composed by other tektin proteins (TEKT1 to TEKT4) and MIPs to anchor the tektin bundle onto the tubulin wall of A-tubule of the sperm flagellum.</text>
</comment>
<comment type="subunit">
    <text evidence="1 2">Microtubule inner protein component of sperm flagellar doublet microtubules (By similarity). Interacts with TEKT3 (By similarity).</text>
</comment>
<comment type="subcellular location">
    <subcellularLocation>
        <location evidence="1">Cytoplasm</location>
        <location evidence="1">Cytoskeleton</location>
        <location evidence="1">Flagellum axoneme</location>
    </subcellularLocation>
</comment>
<comment type="PTM">
    <text evidence="1">Ubiquitinated, leading to its degradation. Deubiquitinated by USP16, promoting its stability.</text>
</comment>
<comment type="similarity">
    <text evidence="4">Belongs to the tektin family.</text>
</comment>
<protein>
    <recommendedName>
        <fullName>Tektin-5</fullName>
    </recommendedName>
</protein>
<dbReference type="EMBL" id="AB179415">
    <property type="protein sequence ID" value="BAE02466.1"/>
    <property type="molecule type" value="mRNA"/>
</dbReference>
<dbReference type="RefSeq" id="NP_001272191.1">
    <property type="nucleotide sequence ID" value="NM_001285262.1"/>
</dbReference>
<dbReference type="SMR" id="Q4R353"/>
<dbReference type="STRING" id="9541.ENSMFAP00000028344"/>
<dbReference type="eggNOG" id="KOG2685">
    <property type="taxonomic scope" value="Eukaryota"/>
</dbReference>
<dbReference type="Proteomes" id="UP000233100">
    <property type="component" value="Unplaced"/>
</dbReference>
<dbReference type="GO" id="GO:0160111">
    <property type="term" value="C:axonemal A tubule inner sheath"/>
    <property type="evidence" value="ECO:0000250"/>
    <property type="project" value="UniProtKB"/>
</dbReference>
<dbReference type="GO" id="GO:0005634">
    <property type="term" value="C:nucleus"/>
    <property type="evidence" value="ECO:0007669"/>
    <property type="project" value="TreeGrafter"/>
</dbReference>
<dbReference type="GO" id="GO:0036126">
    <property type="term" value="C:sperm flagellum"/>
    <property type="evidence" value="ECO:0000250"/>
    <property type="project" value="UniProtKB"/>
</dbReference>
<dbReference type="GO" id="GO:0060271">
    <property type="term" value="P:cilium assembly"/>
    <property type="evidence" value="ECO:0007669"/>
    <property type="project" value="TreeGrafter"/>
</dbReference>
<dbReference type="GO" id="GO:0030317">
    <property type="term" value="P:flagellated sperm motility"/>
    <property type="evidence" value="ECO:0000250"/>
    <property type="project" value="UniProtKB"/>
</dbReference>
<dbReference type="InterPro" id="IPR048256">
    <property type="entry name" value="Tektin-like"/>
</dbReference>
<dbReference type="InterPro" id="IPR000435">
    <property type="entry name" value="Tektins"/>
</dbReference>
<dbReference type="PANTHER" id="PTHR19960">
    <property type="entry name" value="TEKTIN"/>
    <property type="match status" value="1"/>
</dbReference>
<dbReference type="PANTHER" id="PTHR19960:SF23">
    <property type="entry name" value="TEKTIN-5"/>
    <property type="match status" value="1"/>
</dbReference>
<dbReference type="Pfam" id="PF03148">
    <property type="entry name" value="Tektin"/>
    <property type="match status" value="1"/>
</dbReference>
<dbReference type="PRINTS" id="PR00511">
    <property type="entry name" value="TEKTIN"/>
</dbReference>
<name>TEKT5_MACFA</name>
<gene>
    <name type="primary">TEKT5</name>
    <name type="ORF">QtsA-19450</name>
</gene>
<feature type="chain" id="PRO_0000261172" description="Tektin-5">
    <location>
        <begin position="1"/>
        <end position="485"/>
    </location>
</feature>
<feature type="coiled-coil region" evidence="3">
    <location>
        <begin position="113"/>
        <end position="185"/>
    </location>
</feature>
<feature type="coiled-coil region" evidence="3">
    <location>
        <begin position="225"/>
        <end position="251"/>
    </location>
</feature>
<feature type="coiled-coil region" evidence="3">
    <location>
        <begin position="342"/>
        <end position="385"/>
    </location>
</feature>
<feature type="coiled-coil region" evidence="3">
    <location>
        <begin position="423"/>
        <end position="443"/>
    </location>
</feature>